<proteinExistence type="inferred from homology"/>
<reference key="1">
    <citation type="journal article" date="2008" name="PLoS Genet.">
        <title>Complete genome sequence of the N2-fixing broad host range endophyte Klebsiella pneumoniae 342 and virulence predictions verified in mice.</title>
        <authorList>
            <person name="Fouts D.E."/>
            <person name="Tyler H.L."/>
            <person name="DeBoy R.T."/>
            <person name="Daugherty S."/>
            <person name="Ren Q."/>
            <person name="Badger J.H."/>
            <person name="Durkin A.S."/>
            <person name="Huot H."/>
            <person name="Shrivastava S."/>
            <person name="Kothari S."/>
            <person name="Dodson R.J."/>
            <person name="Mohamoud Y."/>
            <person name="Khouri H."/>
            <person name="Roesch L.F.W."/>
            <person name="Krogfelt K.A."/>
            <person name="Struve C."/>
            <person name="Triplett E.W."/>
            <person name="Methe B.A."/>
        </authorList>
    </citation>
    <scope>NUCLEOTIDE SEQUENCE [LARGE SCALE GENOMIC DNA]</scope>
    <source>
        <strain>342</strain>
    </source>
</reference>
<sequence length="417" mass="45454">MLKREMNIADYDAELWQAMEQEKVRQEEHIELIASENYTSPRVMQAQGSQLTNKYAEGYPGKRYYGGCEYVDVVEQLAIDRAKELFGADYANVQPHSGSQANFAVYTALLQPGDTVLGMNLAQGGHLTHGSPVNFSGKLYNIIPYGIDESGKIDYDDMAKQAQEHKPKMIIGGFSAYSGIVDWAKMREIADSIGAYLFVDMAHVAGLIAAGVYPNPVPHAHVVTTTTHKTLAGPRGGLILAKGGSEELYKKLNSAVFPSAQGGPLMHVIAAKAVALKEAMEPEFKVYQQQVAKNAKAMVEVFLNRGYKVVSGGTENHLFLLDLVDKNLTGKEADAALGRANITVNKNSVPNDPKSPFVTSGIRIGSPAVTRRGFKEAEVKELAGWMCDVLDNINDEAVIERVKGKVLDICARFPVYA</sequence>
<evidence type="ECO:0000255" key="1">
    <source>
        <dbReference type="HAMAP-Rule" id="MF_00051"/>
    </source>
</evidence>
<comment type="function">
    <text evidence="1">Catalyzes the reversible interconversion of serine and glycine with tetrahydrofolate (THF) serving as the one-carbon carrier. This reaction serves as the major source of one-carbon groups required for the biosynthesis of purines, thymidylate, methionine, and other important biomolecules. Also exhibits THF-independent aldolase activity toward beta-hydroxyamino acids, producing glycine and aldehydes, via a retro-aldol mechanism.</text>
</comment>
<comment type="catalytic activity">
    <reaction evidence="1">
        <text>(6R)-5,10-methylene-5,6,7,8-tetrahydrofolate + glycine + H2O = (6S)-5,6,7,8-tetrahydrofolate + L-serine</text>
        <dbReference type="Rhea" id="RHEA:15481"/>
        <dbReference type="ChEBI" id="CHEBI:15377"/>
        <dbReference type="ChEBI" id="CHEBI:15636"/>
        <dbReference type="ChEBI" id="CHEBI:33384"/>
        <dbReference type="ChEBI" id="CHEBI:57305"/>
        <dbReference type="ChEBI" id="CHEBI:57453"/>
        <dbReference type="EC" id="2.1.2.1"/>
    </reaction>
</comment>
<comment type="cofactor">
    <cofactor evidence="1">
        <name>pyridoxal 5'-phosphate</name>
        <dbReference type="ChEBI" id="CHEBI:597326"/>
    </cofactor>
</comment>
<comment type="pathway">
    <text evidence="1">One-carbon metabolism; tetrahydrofolate interconversion.</text>
</comment>
<comment type="pathway">
    <text evidence="1">Amino-acid biosynthesis; glycine biosynthesis; glycine from L-serine: step 1/1.</text>
</comment>
<comment type="subunit">
    <text evidence="1">Homodimer.</text>
</comment>
<comment type="subcellular location">
    <subcellularLocation>
        <location evidence="1">Cytoplasm</location>
    </subcellularLocation>
</comment>
<comment type="similarity">
    <text evidence="1">Belongs to the SHMT family.</text>
</comment>
<dbReference type="EC" id="2.1.2.1" evidence="1"/>
<dbReference type="EMBL" id="CP000964">
    <property type="protein sequence ID" value="ACI07936.1"/>
    <property type="molecule type" value="Genomic_DNA"/>
</dbReference>
<dbReference type="SMR" id="B5XNI6"/>
<dbReference type="KEGG" id="kpe:KPK_1246"/>
<dbReference type="HOGENOM" id="CLU_022477_2_1_6"/>
<dbReference type="UniPathway" id="UPA00193"/>
<dbReference type="UniPathway" id="UPA00288">
    <property type="reaction ID" value="UER01023"/>
</dbReference>
<dbReference type="Proteomes" id="UP000001734">
    <property type="component" value="Chromosome"/>
</dbReference>
<dbReference type="GO" id="GO:0005829">
    <property type="term" value="C:cytosol"/>
    <property type="evidence" value="ECO:0007669"/>
    <property type="project" value="TreeGrafter"/>
</dbReference>
<dbReference type="GO" id="GO:0004372">
    <property type="term" value="F:glycine hydroxymethyltransferase activity"/>
    <property type="evidence" value="ECO:0007669"/>
    <property type="project" value="UniProtKB-UniRule"/>
</dbReference>
<dbReference type="GO" id="GO:0030170">
    <property type="term" value="F:pyridoxal phosphate binding"/>
    <property type="evidence" value="ECO:0007669"/>
    <property type="project" value="UniProtKB-UniRule"/>
</dbReference>
<dbReference type="GO" id="GO:0019264">
    <property type="term" value="P:glycine biosynthetic process from serine"/>
    <property type="evidence" value="ECO:0007669"/>
    <property type="project" value="UniProtKB-UniRule"/>
</dbReference>
<dbReference type="GO" id="GO:0035999">
    <property type="term" value="P:tetrahydrofolate interconversion"/>
    <property type="evidence" value="ECO:0007669"/>
    <property type="project" value="UniProtKB-UniRule"/>
</dbReference>
<dbReference type="CDD" id="cd00378">
    <property type="entry name" value="SHMT"/>
    <property type="match status" value="1"/>
</dbReference>
<dbReference type="FunFam" id="3.40.640.10:FF:000001">
    <property type="entry name" value="Serine hydroxymethyltransferase"/>
    <property type="match status" value="1"/>
</dbReference>
<dbReference type="FunFam" id="3.90.1150.10:FF:000003">
    <property type="entry name" value="Serine hydroxymethyltransferase"/>
    <property type="match status" value="1"/>
</dbReference>
<dbReference type="Gene3D" id="3.90.1150.10">
    <property type="entry name" value="Aspartate Aminotransferase, domain 1"/>
    <property type="match status" value="1"/>
</dbReference>
<dbReference type="Gene3D" id="3.40.640.10">
    <property type="entry name" value="Type I PLP-dependent aspartate aminotransferase-like (Major domain)"/>
    <property type="match status" value="1"/>
</dbReference>
<dbReference type="HAMAP" id="MF_00051">
    <property type="entry name" value="SHMT"/>
    <property type="match status" value="1"/>
</dbReference>
<dbReference type="InterPro" id="IPR015424">
    <property type="entry name" value="PyrdxlP-dep_Trfase"/>
</dbReference>
<dbReference type="InterPro" id="IPR015421">
    <property type="entry name" value="PyrdxlP-dep_Trfase_major"/>
</dbReference>
<dbReference type="InterPro" id="IPR015422">
    <property type="entry name" value="PyrdxlP-dep_Trfase_small"/>
</dbReference>
<dbReference type="InterPro" id="IPR001085">
    <property type="entry name" value="Ser_HO-MeTrfase"/>
</dbReference>
<dbReference type="InterPro" id="IPR049943">
    <property type="entry name" value="Ser_HO-MeTrfase-like"/>
</dbReference>
<dbReference type="InterPro" id="IPR019798">
    <property type="entry name" value="Ser_HO-MeTrfase_PLP_BS"/>
</dbReference>
<dbReference type="InterPro" id="IPR039429">
    <property type="entry name" value="SHMT-like_dom"/>
</dbReference>
<dbReference type="NCBIfam" id="NF000586">
    <property type="entry name" value="PRK00011.1"/>
    <property type="match status" value="1"/>
</dbReference>
<dbReference type="PANTHER" id="PTHR11680">
    <property type="entry name" value="SERINE HYDROXYMETHYLTRANSFERASE"/>
    <property type="match status" value="1"/>
</dbReference>
<dbReference type="PANTHER" id="PTHR11680:SF50">
    <property type="entry name" value="SERINE HYDROXYMETHYLTRANSFERASE"/>
    <property type="match status" value="1"/>
</dbReference>
<dbReference type="Pfam" id="PF00464">
    <property type="entry name" value="SHMT"/>
    <property type="match status" value="1"/>
</dbReference>
<dbReference type="PIRSF" id="PIRSF000412">
    <property type="entry name" value="SHMT"/>
    <property type="match status" value="1"/>
</dbReference>
<dbReference type="SUPFAM" id="SSF53383">
    <property type="entry name" value="PLP-dependent transferases"/>
    <property type="match status" value="1"/>
</dbReference>
<dbReference type="PROSITE" id="PS00096">
    <property type="entry name" value="SHMT"/>
    <property type="match status" value="1"/>
</dbReference>
<organism>
    <name type="scientific">Klebsiella pneumoniae (strain 342)</name>
    <dbReference type="NCBI Taxonomy" id="507522"/>
    <lineage>
        <taxon>Bacteria</taxon>
        <taxon>Pseudomonadati</taxon>
        <taxon>Pseudomonadota</taxon>
        <taxon>Gammaproteobacteria</taxon>
        <taxon>Enterobacterales</taxon>
        <taxon>Enterobacteriaceae</taxon>
        <taxon>Klebsiella/Raoultella group</taxon>
        <taxon>Klebsiella</taxon>
        <taxon>Klebsiella pneumoniae complex</taxon>
    </lineage>
</organism>
<feature type="chain" id="PRO_1000091549" description="Serine hydroxymethyltransferase">
    <location>
        <begin position="1"/>
        <end position="417"/>
    </location>
</feature>
<feature type="binding site" evidence="1">
    <location>
        <position position="121"/>
    </location>
    <ligand>
        <name>(6S)-5,6,7,8-tetrahydrofolate</name>
        <dbReference type="ChEBI" id="CHEBI:57453"/>
    </ligand>
</feature>
<feature type="binding site" evidence="1">
    <location>
        <begin position="125"/>
        <end position="127"/>
    </location>
    <ligand>
        <name>(6S)-5,6,7,8-tetrahydrofolate</name>
        <dbReference type="ChEBI" id="CHEBI:57453"/>
    </ligand>
</feature>
<feature type="binding site" evidence="1">
    <location>
        <begin position="355"/>
        <end position="357"/>
    </location>
    <ligand>
        <name>(6S)-5,6,7,8-tetrahydrofolate</name>
        <dbReference type="ChEBI" id="CHEBI:57453"/>
    </ligand>
</feature>
<feature type="site" description="Plays an important role in substrate specificity" evidence="1">
    <location>
        <position position="228"/>
    </location>
</feature>
<feature type="modified residue" description="N6-(pyridoxal phosphate)lysine" evidence="1">
    <location>
        <position position="229"/>
    </location>
</feature>
<keyword id="KW-0028">Amino-acid biosynthesis</keyword>
<keyword id="KW-0963">Cytoplasm</keyword>
<keyword id="KW-0554">One-carbon metabolism</keyword>
<keyword id="KW-0663">Pyridoxal phosphate</keyword>
<keyword id="KW-0808">Transferase</keyword>
<accession>B5XNI6</accession>
<protein>
    <recommendedName>
        <fullName evidence="1">Serine hydroxymethyltransferase</fullName>
        <shortName evidence="1">SHMT</shortName>
        <shortName evidence="1">Serine methylase</shortName>
        <ecNumber evidence="1">2.1.2.1</ecNumber>
    </recommendedName>
</protein>
<name>GLYA_KLEP3</name>
<gene>
    <name evidence="1" type="primary">glyA</name>
    <name type="ordered locus">KPK_1246</name>
</gene>